<sequence length="435" mass="47745">MLQCAPKKNERLRGSCDFCTQSKLRCNKNKPSCRRCTIQQQPCVYSVARRTGRPPKRPRKANDGQEANEQHGDQDPVTSTPGGSCQQQSNHLLDVEGDGANFTLADASTTAQDRETAACTALDNALLMGGTFGFSSLLDDPLIQSDDFLSFSLCMPPGEEEGHMASPCSPPILPSIDVPHLPARFGFLESSVESGLHGRNGPHLIEQPDKTVPSSFSEMEKIYDEGLTFSGLDSAINAVTNNGKGEPSIPGTMAAHPHSKRQCFCSTSMSKLQMLVSHPTLCQKNSRARFDMTLFLEEVVFSIYRDVLQCLVCQSKSLHSLASLCICTDWVIEALRDVAQDLSSGQDNLGGFRAGLCPPKDKFSICVGRFVLDDQLRESCTRSLVRYRLRKLIPIMDTMMKLNYRGAGGALSQAIRTMVEDVRHKIESALGMMEL</sequence>
<proteinExistence type="inferred from homology"/>
<comment type="function">
    <text evidence="3 5">Transcription factor that regulates the expression of the gene clusters that mediate the biosynthesis of the host-selective toxins (HSTs) ACT-toxins responsible for brown spot of tangerine disease by the tangerine pathotype which affects tangerines and mandarins (Probable). ACT-toxins consist of three moieties, 9,10-epoxy-8-hydroxy-9-methyl-decatrienoic acid (EDA), valine and a polyketide (PubMed:22846083). ACT-toxin I is toxic to both citrus and pear; toxin II the 5''-deoxy derivative of ACT-toxin I, is highly toxic to pear and slightly toxic to citrus (PubMed:22846083). On cellular level, ACT-toxins affect plasma membrane of susceptible cells and cause a sudden increase in loss of K(+) after a few minutes of toxin treatment (PubMed:22846083).</text>
</comment>
<comment type="subcellular location">
    <subcellularLocation>
        <location evidence="1">Nucleus</location>
    </subcellularLocation>
</comment>
<comment type="miscellaneous">
    <text evidence="3">Gene clusters encoding host-selective toxins (HSTs) are localized on conditionally dispensable chromosomes (CDCs), also called supernumerary chromosomes, where they are present in multiple copies (PubMed:22846083). The CDCs are not essential for saprophytic growth but controls host-selective pathogenicity (PubMed:22846083).</text>
</comment>
<reference key="1">
    <citation type="submission" date="2004-04" db="EMBL/GenBank/DDBJ databases">
        <title>The pathway-specific regulatory protein ACTTR in the tangerine pathotype of Alternaria alternata activates ACTT3 required for ACT-toxin biosynthesis.</title>
        <authorList>
            <person name="Masunaka A."/>
            <person name="Ishikura K."/>
            <person name="Asada K."/>
            <person name="Ohtsuki R."/>
            <person name="Tanaka A."/>
            <person name="Tsuge T."/>
            <person name="Peever T.L."/>
            <person name="Timmer L.W."/>
            <person name="Yamamoto M."/>
            <person name="Yamamoto H."/>
            <person name="Akimitsu K."/>
        </authorList>
    </citation>
    <scope>NUCLEOTIDE SEQUENCE [GENOMIC DNA]</scope>
    <source>
        <strain>SH20</strain>
    </source>
</reference>
<reference key="2">
    <citation type="journal article" date="2009" name="Phytopathology">
        <title>Function of genes encoding acyl-CoA synthetase and enoyl-CoA hydratase for host-selective act-toxin biosynthesis in the tangerine pathotype of Alternaria alternata.</title>
        <authorList>
            <person name="Miyamoto M."/>
            <person name="Ishii Y."/>
            <person name="Honda A."/>
            <person name="Masunaka A."/>
            <person name="Tsuge T."/>
            <person name="Yamamoto M."/>
            <person name="Ohtani K."/>
            <person name="Fukumoto T."/>
            <person name="Gomi K."/>
            <person name="Peever T.L."/>
            <person name="Akimitsu K."/>
        </authorList>
    </citation>
    <scope>NUCLEOTIDE SEQUENCE [GENOMIC DNA]</scope>
    <source>
        <strain>SH20</strain>
    </source>
</reference>
<reference key="3">
    <citation type="journal article" date="2013" name="FEMS Microbiol. Rev.">
        <title>Host-selective toxins produced by the plant pathogenic fungus Alternaria alternata.</title>
        <authorList>
            <person name="Tsuge T."/>
            <person name="Harimoto Y."/>
            <person name="Akimitsu K."/>
            <person name="Ohtani K."/>
            <person name="Kodama M."/>
            <person name="Akagi Y."/>
            <person name="Egusa M."/>
            <person name="Yamamoto M."/>
            <person name="Otani H."/>
        </authorList>
    </citation>
    <scope>REVIEW ON HOST-SELECTIVE TOXINS</scope>
</reference>
<dbReference type="EMBL" id="AB176851">
    <property type="protein sequence ID" value="BAD93200.1"/>
    <property type="molecule type" value="Genomic_DNA"/>
</dbReference>
<dbReference type="EMBL" id="AB176941">
    <property type="protein sequence ID" value="BAD93202.1"/>
    <property type="molecule type" value="Genomic_DNA"/>
</dbReference>
<dbReference type="SMR" id="Q589W9"/>
<dbReference type="GO" id="GO:0005634">
    <property type="term" value="C:nucleus"/>
    <property type="evidence" value="ECO:0007669"/>
    <property type="project" value="UniProtKB-SubCell"/>
</dbReference>
<dbReference type="GO" id="GO:0003677">
    <property type="term" value="F:DNA binding"/>
    <property type="evidence" value="ECO:0007669"/>
    <property type="project" value="UniProtKB-KW"/>
</dbReference>
<dbReference type="GO" id="GO:0000981">
    <property type="term" value="F:DNA-binding transcription factor activity, RNA polymerase II-specific"/>
    <property type="evidence" value="ECO:0007669"/>
    <property type="project" value="InterPro"/>
</dbReference>
<dbReference type="GO" id="GO:0008270">
    <property type="term" value="F:zinc ion binding"/>
    <property type="evidence" value="ECO:0007669"/>
    <property type="project" value="InterPro"/>
</dbReference>
<dbReference type="CDD" id="cd00067">
    <property type="entry name" value="GAL4"/>
    <property type="match status" value="1"/>
</dbReference>
<dbReference type="Gene3D" id="4.10.240.10">
    <property type="entry name" value="Zn(2)-C6 fungal-type DNA-binding domain"/>
    <property type="match status" value="1"/>
</dbReference>
<dbReference type="InterPro" id="IPR050675">
    <property type="entry name" value="OAF3"/>
</dbReference>
<dbReference type="InterPro" id="IPR036864">
    <property type="entry name" value="Zn2-C6_fun-type_DNA-bd_sf"/>
</dbReference>
<dbReference type="InterPro" id="IPR001138">
    <property type="entry name" value="Zn2Cys6_DnaBD"/>
</dbReference>
<dbReference type="PANTHER" id="PTHR31069:SF31">
    <property type="entry name" value="MONODICTYPHENONE CLUSTER TRANSCRIPTION FACTOR-RELATED"/>
    <property type="match status" value="1"/>
</dbReference>
<dbReference type="PANTHER" id="PTHR31069">
    <property type="entry name" value="OLEATE-ACTIVATED TRANSCRIPTION FACTOR 1-RELATED"/>
    <property type="match status" value="1"/>
</dbReference>
<dbReference type="Pfam" id="PF00172">
    <property type="entry name" value="Zn_clus"/>
    <property type="match status" value="1"/>
</dbReference>
<dbReference type="PRINTS" id="PR00755">
    <property type="entry name" value="AFLATOXINBRP"/>
</dbReference>
<dbReference type="SMART" id="SM00066">
    <property type="entry name" value="GAL4"/>
    <property type="match status" value="1"/>
</dbReference>
<dbReference type="SUPFAM" id="SSF57701">
    <property type="entry name" value="Zn2/Cys6 DNA-binding domain"/>
    <property type="match status" value="1"/>
</dbReference>
<dbReference type="PROSITE" id="PS00463">
    <property type="entry name" value="ZN2_CY6_FUNGAL_1"/>
    <property type="match status" value="1"/>
</dbReference>
<dbReference type="PROSITE" id="PS50048">
    <property type="entry name" value="ZN2_CY6_FUNGAL_2"/>
    <property type="match status" value="1"/>
</dbReference>
<feature type="chain" id="PRO_0000444840" description="Transcription activator ACTTR">
    <location>
        <begin position="1"/>
        <end position="435"/>
    </location>
</feature>
<feature type="DNA-binding region" description="Zn(2)-C6 fungal-type" evidence="1">
    <location>
        <begin position="16"/>
        <end position="43"/>
    </location>
</feature>
<feature type="region of interest" description="Disordered" evidence="2">
    <location>
        <begin position="48"/>
        <end position="89"/>
    </location>
</feature>
<feature type="compositionally biased region" description="Basic residues" evidence="2">
    <location>
        <begin position="50"/>
        <end position="59"/>
    </location>
</feature>
<feature type="compositionally biased region" description="Basic and acidic residues" evidence="2">
    <location>
        <begin position="60"/>
        <end position="74"/>
    </location>
</feature>
<feature type="compositionally biased region" description="Polar residues" evidence="2">
    <location>
        <begin position="76"/>
        <end position="89"/>
    </location>
</feature>
<keyword id="KW-0238">DNA-binding</keyword>
<keyword id="KW-0479">Metal-binding</keyword>
<keyword id="KW-0539">Nucleus</keyword>
<keyword id="KW-0804">Transcription</keyword>
<keyword id="KW-0805">Transcription regulation</keyword>
<keyword id="KW-0862">Zinc</keyword>
<name>ACTTR_ALTAL</name>
<accession>Q589W9</accession>
<protein>
    <recommendedName>
        <fullName evidence="4">Transcription activator ACTTR</fullName>
    </recommendedName>
    <alternativeName>
        <fullName evidence="4">ACT-toxin biosynthesis regulator</fullName>
    </alternativeName>
</protein>
<organism>
    <name type="scientific">Alternaria alternata</name>
    <name type="common">Alternaria rot fungus</name>
    <name type="synonym">Torula alternata</name>
    <dbReference type="NCBI Taxonomy" id="5599"/>
    <lineage>
        <taxon>Eukaryota</taxon>
        <taxon>Fungi</taxon>
        <taxon>Dikarya</taxon>
        <taxon>Ascomycota</taxon>
        <taxon>Pezizomycotina</taxon>
        <taxon>Dothideomycetes</taxon>
        <taxon>Pleosporomycetidae</taxon>
        <taxon>Pleosporales</taxon>
        <taxon>Pleosporineae</taxon>
        <taxon>Pleosporaceae</taxon>
        <taxon>Alternaria</taxon>
        <taxon>Alternaria sect. Alternaria</taxon>
        <taxon>Alternaria alternata complex</taxon>
    </lineage>
</organism>
<evidence type="ECO:0000255" key="1">
    <source>
        <dbReference type="PROSITE-ProRule" id="PRU00227"/>
    </source>
</evidence>
<evidence type="ECO:0000256" key="2">
    <source>
        <dbReference type="SAM" id="MobiDB-lite"/>
    </source>
</evidence>
<evidence type="ECO:0000303" key="3">
    <source>
    </source>
</evidence>
<evidence type="ECO:0000303" key="4">
    <source ref="1"/>
</evidence>
<evidence type="ECO:0000305" key="5">
    <source ref="1"/>
</evidence>
<gene>
    <name evidence="4" type="primary">ACTTR</name>
</gene>